<sequence length="104" mass="11936">MAIIPDKQDSTVLERKQQKLKPPSMYKVVLLNDDFTPMEFVVMVVQEYFKKDRETATQIMLKVHREGRGVCGVYTRDIASTKVEQVVTHARQAGHPLQCVMEEA</sequence>
<comment type="function">
    <text evidence="1">Involved in the modulation of the specificity of the ClpAP-mediated ATP-dependent protein degradation.</text>
</comment>
<comment type="subunit">
    <text evidence="1">Binds to the N-terminal domain of the chaperone ClpA.</text>
</comment>
<comment type="similarity">
    <text evidence="1">Belongs to the ClpS family.</text>
</comment>
<gene>
    <name evidence="1" type="primary">clpS</name>
    <name type="ordered locus">Bcenmc03_2544</name>
</gene>
<evidence type="ECO:0000255" key="1">
    <source>
        <dbReference type="HAMAP-Rule" id="MF_00302"/>
    </source>
</evidence>
<dbReference type="EMBL" id="CP000958">
    <property type="protein sequence ID" value="ACA91705.1"/>
    <property type="molecule type" value="Genomic_DNA"/>
</dbReference>
<dbReference type="RefSeq" id="WP_006398529.1">
    <property type="nucleotide sequence ID" value="NC_010508.1"/>
</dbReference>
<dbReference type="SMR" id="B1JXD0"/>
<dbReference type="GeneID" id="98107640"/>
<dbReference type="KEGG" id="bcm:Bcenmc03_2544"/>
<dbReference type="HOGENOM" id="CLU_134358_0_0_4"/>
<dbReference type="Proteomes" id="UP000002169">
    <property type="component" value="Chromosome 1"/>
</dbReference>
<dbReference type="GO" id="GO:0030163">
    <property type="term" value="P:protein catabolic process"/>
    <property type="evidence" value="ECO:0007669"/>
    <property type="project" value="InterPro"/>
</dbReference>
<dbReference type="GO" id="GO:0006508">
    <property type="term" value="P:proteolysis"/>
    <property type="evidence" value="ECO:0007669"/>
    <property type="project" value="UniProtKB-UniRule"/>
</dbReference>
<dbReference type="FunFam" id="3.30.1390.10:FF:000002">
    <property type="entry name" value="ATP-dependent Clp protease adapter protein ClpS"/>
    <property type="match status" value="1"/>
</dbReference>
<dbReference type="Gene3D" id="3.30.1390.10">
    <property type="match status" value="1"/>
</dbReference>
<dbReference type="HAMAP" id="MF_00302">
    <property type="entry name" value="ClpS"/>
    <property type="match status" value="1"/>
</dbReference>
<dbReference type="InterPro" id="IPR022935">
    <property type="entry name" value="ClpS"/>
</dbReference>
<dbReference type="InterPro" id="IPR003769">
    <property type="entry name" value="ClpS_core"/>
</dbReference>
<dbReference type="InterPro" id="IPR014719">
    <property type="entry name" value="Ribosomal_bL12_C/ClpS-like"/>
</dbReference>
<dbReference type="NCBIfam" id="NF000672">
    <property type="entry name" value="PRK00033.1-5"/>
    <property type="match status" value="1"/>
</dbReference>
<dbReference type="PANTHER" id="PTHR33473:SF19">
    <property type="entry name" value="ATP-DEPENDENT CLP PROTEASE ADAPTER PROTEIN CLPS"/>
    <property type="match status" value="1"/>
</dbReference>
<dbReference type="PANTHER" id="PTHR33473">
    <property type="entry name" value="ATP-DEPENDENT CLP PROTEASE ADAPTER PROTEIN CLPS1, CHLOROPLASTIC"/>
    <property type="match status" value="1"/>
</dbReference>
<dbReference type="Pfam" id="PF02617">
    <property type="entry name" value="ClpS"/>
    <property type="match status" value="1"/>
</dbReference>
<dbReference type="SUPFAM" id="SSF54736">
    <property type="entry name" value="ClpS-like"/>
    <property type="match status" value="1"/>
</dbReference>
<proteinExistence type="inferred from homology"/>
<protein>
    <recommendedName>
        <fullName evidence="1">ATP-dependent Clp protease adapter protein ClpS</fullName>
    </recommendedName>
</protein>
<accession>B1JXD0</accession>
<feature type="chain" id="PRO_1000115448" description="ATP-dependent Clp protease adapter protein ClpS">
    <location>
        <begin position="1"/>
        <end position="104"/>
    </location>
</feature>
<organism>
    <name type="scientific">Burkholderia orbicola (strain MC0-3)</name>
    <dbReference type="NCBI Taxonomy" id="406425"/>
    <lineage>
        <taxon>Bacteria</taxon>
        <taxon>Pseudomonadati</taxon>
        <taxon>Pseudomonadota</taxon>
        <taxon>Betaproteobacteria</taxon>
        <taxon>Burkholderiales</taxon>
        <taxon>Burkholderiaceae</taxon>
        <taxon>Burkholderia</taxon>
        <taxon>Burkholderia cepacia complex</taxon>
        <taxon>Burkholderia orbicola</taxon>
    </lineage>
</organism>
<name>CLPS_BURO0</name>
<reference key="1">
    <citation type="submission" date="2008-02" db="EMBL/GenBank/DDBJ databases">
        <title>Complete sequence of chromosome 1 of Burkholderia cenocepacia MC0-3.</title>
        <authorList>
            <person name="Copeland A."/>
            <person name="Lucas S."/>
            <person name="Lapidus A."/>
            <person name="Barry K."/>
            <person name="Bruce D."/>
            <person name="Goodwin L."/>
            <person name="Glavina del Rio T."/>
            <person name="Dalin E."/>
            <person name="Tice H."/>
            <person name="Pitluck S."/>
            <person name="Chain P."/>
            <person name="Malfatti S."/>
            <person name="Shin M."/>
            <person name="Vergez L."/>
            <person name="Schmutz J."/>
            <person name="Larimer F."/>
            <person name="Land M."/>
            <person name="Hauser L."/>
            <person name="Kyrpides N."/>
            <person name="Mikhailova N."/>
            <person name="Tiedje J."/>
            <person name="Richardson P."/>
        </authorList>
    </citation>
    <scope>NUCLEOTIDE SEQUENCE [LARGE SCALE GENOMIC DNA]</scope>
    <source>
        <strain>MC0-3</strain>
    </source>
</reference>